<organism>
    <name type="scientific">Xenopus laevis</name>
    <name type="common">African clawed frog</name>
    <dbReference type="NCBI Taxonomy" id="8355"/>
    <lineage>
        <taxon>Eukaryota</taxon>
        <taxon>Metazoa</taxon>
        <taxon>Chordata</taxon>
        <taxon>Craniata</taxon>
        <taxon>Vertebrata</taxon>
        <taxon>Euteleostomi</taxon>
        <taxon>Amphibia</taxon>
        <taxon>Batrachia</taxon>
        <taxon>Anura</taxon>
        <taxon>Pipoidea</taxon>
        <taxon>Pipidae</taxon>
        <taxon>Xenopodinae</taxon>
        <taxon>Xenopus</taxon>
        <taxon>Xenopus</taxon>
    </lineage>
</organism>
<reference key="1">
    <citation type="submission" date="2004-05" db="EMBL/GenBank/DDBJ databases">
        <authorList>
            <consortium name="NIH - Xenopus Gene Collection (XGC) project"/>
        </authorList>
    </citation>
    <scope>NUCLEOTIDE SEQUENCE [LARGE SCALE MRNA]</scope>
    <source>
        <tissue>Embryo</tissue>
    </source>
</reference>
<feature type="chain" id="PRO_0000274592" description="Speckle-type POZ protein-like">
    <location>
        <begin position="1"/>
        <end position="392"/>
    </location>
</feature>
<feature type="domain" description="MATH" evidence="3">
    <location>
        <begin position="31"/>
        <end position="161"/>
    </location>
</feature>
<feature type="domain" description="BTB" evidence="2">
    <location>
        <begin position="200"/>
        <end position="267"/>
    </location>
</feature>
<keyword id="KW-0539">Nucleus</keyword>
<keyword id="KW-1185">Reference proteome</keyword>
<keyword id="KW-0833">Ubl conjugation pathway</keyword>
<gene>
    <name type="primary">spopl</name>
</gene>
<comment type="function">
    <text evidence="1">Component of a cullin-RING-based BCR (BTB-CUL3-RBX1) E3 ubiquitin-protein ligase complex that mediates the ubiquitination and subsequent proteasomal degradation of target proteins, but with relatively low efficiency.</text>
</comment>
<comment type="pathway">
    <text>Protein modification; protein ubiquitination.</text>
</comment>
<comment type="subunit">
    <text evidence="1">Homodimer. Heterodimer with SPOP. Component of cullin-RING-based BCR (BTB-CUL3-RBX1) E3 ubiquitin-protein ligase complexes containing homodimeric SPOPL or the heterodimer formed by SPOP and SPOPL (By similarity).</text>
</comment>
<comment type="subcellular location">
    <subcellularLocation>
        <location evidence="1">Nucleus</location>
    </subcellularLocation>
</comment>
<comment type="similarity">
    <text evidence="4">Belongs to the Tdpoz family.</text>
</comment>
<accession>Q6GR09</accession>
<sequence length="392" mass="44643">MHEVATTVSSAEMSSPPVAESWCYTQVKVVKFSYMWTINNFSFCREETGEVLKSSSFSSGPNDKLKWCLRVNPKGLDDESKDYLSLYLLLVSCPKNEVRAKFKFSLLNSKNEETKAMESQRAYRFVQGKDWGFKKYIRRDFLLDEANGLLPDDKLTLYCEVSVVQDSINISGQSSSNNLKVPECRLAEDMGYLWENRRFTDCSLFVEGKEFKAHKSILAARSPVFSAMFEHPMQESRKNRVYIRDVDPEVFKEMMRFIYTGGTPHVDKMADKLLAAADKYALERLKVMCEESLCNNLTVENVADVLILADLHSAEQLKAQAIDFINRCSVLGQLGCKDRKNCNSNQTMDIMETAGWKSMIKSHPHLVAEAFRALASAQCPPFGIPRKRLKQS</sequence>
<dbReference type="EMBL" id="BC071125">
    <property type="protein sequence ID" value="AAH71125.1"/>
    <property type="molecule type" value="mRNA"/>
</dbReference>
<dbReference type="RefSeq" id="NP_001085358.1">
    <property type="nucleotide sequence ID" value="NM_001091889.1"/>
</dbReference>
<dbReference type="SMR" id="Q6GR09"/>
<dbReference type="DNASU" id="443784"/>
<dbReference type="GeneID" id="443784"/>
<dbReference type="KEGG" id="xla:443784"/>
<dbReference type="AGR" id="Xenbase:XB-GENE-5871534"/>
<dbReference type="CTD" id="443784"/>
<dbReference type="Xenbase" id="XB-GENE-5871534">
    <property type="gene designation" value="spopl.L"/>
</dbReference>
<dbReference type="OMA" id="GEIFTAH"/>
<dbReference type="OrthoDB" id="6359816at2759"/>
<dbReference type="UniPathway" id="UPA00143"/>
<dbReference type="Proteomes" id="UP000186698">
    <property type="component" value="Chromosome 9_10L"/>
</dbReference>
<dbReference type="Bgee" id="443784">
    <property type="expression patterns" value="Expressed in blastula and 19 other cell types or tissues"/>
</dbReference>
<dbReference type="GO" id="GO:0031463">
    <property type="term" value="C:Cul3-RING ubiquitin ligase complex"/>
    <property type="evidence" value="ECO:0000250"/>
    <property type="project" value="UniProtKB"/>
</dbReference>
<dbReference type="GO" id="GO:0005737">
    <property type="term" value="C:cytoplasm"/>
    <property type="evidence" value="ECO:0000318"/>
    <property type="project" value="GO_Central"/>
</dbReference>
<dbReference type="GO" id="GO:0005634">
    <property type="term" value="C:nucleus"/>
    <property type="evidence" value="ECO:0000318"/>
    <property type="project" value="GO_Central"/>
</dbReference>
<dbReference type="GO" id="GO:0031625">
    <property type="term" value="F:ubiquitin protein ligase binding"/>
    <property type="evidence" value="ECO:0000318"/>
    <property type="project" value="GO_Central"/>
</dbReference>
<dbReference type="GO" id="GO:0031397">
    <property type="term" value="P:negative regulation of protein ubiquitination"/>
    <property type="evidence" value="ECO:0000250"/>
    <property type="project" value="UniProtKB"/>
</dbReference>
<dbReference type="GO" id="GO:0043161">
    <property type="term" value="P:proteasome-mediated ubiquitin-dependent protein catabolic process"/>
    <property type="evidence" value="ECO:0000250"/>
    <property type="project" value="UniProtKB"/>
</dbReference>
<dbReference type="GO" id="GO:0016567">
    <property type="term" value="P:protein ubiquitination"/>
    <property type="evidence" value="ECO:0007669"/>
    <property type="project" value="UniProtKB-UniPathway"/>
</dbReference>
<dbReference type="GO" id="GO:0030162">
    <property type="term" value="P:regulation of proteolysis"/>
    <property type="evidence" value="ECO:0000318"/>
    <property type="project" value="GO_Central"/>
</dbReference>
<dbReference type="CDD" id="cd18519">
    <property type="entry name" value="BACK_SPOPL"/>
    <property type="match status" value="1"/>
</dbReference>
<dbReference type="CDD" id="cd18343">
    <property type="entry name" value="BTB_POZ_SPOPL"/>
    <property type="match status" value="1"/>
</dbReference>
<dbReference type="FunFam" id="2.60.210.10:FF:000028">
    <property type="entry name" value="Speckle-type POZ protein-like"/>
    <property type="match status" value="1"/>
</dbReference>
<dbReference type="FunFam" id="3.30.710.10:FF:000008">
    <property type="entry name" value="Speckle-type POZ protein-like a"/>
    <property type="match status" value="1"/>
</dbReference>
<dbReference type="Gene3D" id="6.10.250.3030">
    <property type="match status" value="1"/>
</dbReference>
<dbReference type="Gene3D" id="6.20.250.50">
    <property type="match status" value="1"/>
</dbReference>
<dbReference type="Gene3D" id="2.60.210.10">
    <property type="entry name" value="Apoptosis, Tumor Necrosis Factor Receptor Associated Protein 2, Chain A"/>
    <property type="match status" value="1"/>
</dbReference>
<dbReference type="Gene3D" id="3.30.710.10">
    <property type="entry name" value="Potassium Channel Kv1.1, Chain A"/>
    <property type="match status" value="1"/>
</dbReference>
<dbReference type="InterPro" id="IPR000210">
    <property type="entry name" value="BTB/POZ_dom"/>
</dbReference>
<dbReference type="InterPro" id="IPR002083">
    <property type="entry name" value="MATH/TRAF_dom"/>
</dbReference>
<dbReference type="InterPro" id="IPR011333">
    <property type="entry name" value="SKP1/BTB/POZ_sf"/>
</dbReference>
<dbReference type="InterPro" id="IPR008974">
    <property type="entry name" value="TRAF-like"/>
</dbReference>
<dbReference type="PANTHER" id="PTHR24413">
    <property type="entry name" value="SPECKLE-TYPE POZ PROTEIN"/>
    <property type="match status" value="1"/>
</dbReference>
<dbReference type="Pfam" id="PF00651">
    <property type="entry name" value="BTB"/>
    <property type="match status" value="1"/>
</dbReference>
<dbReference type="Pfam" id="PF22486">
    <property type="entry name" value="MATH_2"/>
    <property type="match status" value="1"/>
</dbReference>
<dbReference type="SMART" id="SM00225">
    <property type="entry name" value="BTB"/>
    <property type="match status" value="1"/>
</dbReference>
<dbReference type="SMART" id="SM00061">
    <property type="entry name" value="MATH"/>
    <property type="match status" value="1"/>
</dbReference>
<dbReference type="SUPFAM" id="SSF54695">
    <property type="entry name" value="POZ domain"/>
    <property type="match status" value="1"/>
</dbReference>
<dbReference type="SUPFAM" id="SSF49599">
    <property type="entry name" value="TRAF domain-like"/>
    <property type="match status" value="1"/>
</dbReference>
<dbReference type="PROSITE" id="PS50097">
    <property type="entry name" value="BTB"/>
    <property type="match status" value="1"/>
</dbReference>
<dbReference type="PROSITE" id="PS50144">
    <property type="entry name" value="MATH"/>
    <property type="match status" value="1"/>
</dbReference>
<evidence type="ECO:0000250" key="1"/>
<evidence type="ECO:0000255" key="2">
    <source>
        <dbReference type="PROSITE-ProRule" id="PRU00037"/>
    </source>
</evidence>
<evidence type="ECO:0000255" key="3">
    <source>
        <dbReference type="PROSITE-ProRule" id="PRU00129"/>
    </source>
</evidence>
<evidence type="ECO:0000305" key="4"/>
<name>SPOPL_XENLA</name>
<proteinExistence type="evidence at transcript level"/>
<protein>
    <recommendedName>
        <fullName>Speckle-type POZ protein-like</fullName>
    </recommendedName>
</protein>